<proteinExistence type="inferred from homology"/>
<dbReference type="EC" id="7.1.1.-" evidence="1"/>
<dbReference type="EMBL" id="AE002098">
    <property type="protein sequence ID" value="AAF40708.1"/>
    <property type="molecule type" value="Genomic_DNA"/>
</dbReference>
<dbReference type="PIR" id="A81220">
    <property type="entry name" value="A81220"/>
</dbReference>
<dbReference type="RefSeq" id="NP_273310.1">
    <property type="nucleotide sequence ID" value="NC_003112.2"/>
</dbReference>
<dbReference type="RefSeq" id="WP_002215628.1">
    <property type="nucleotide sequence ID" value="NC_003112.2"/>
</dbReference>
<dbReference type="SMR" id="Q7DDS0"/>
<dbReference type="FunCoup" id="Q7DDS0">
    <property type="interactions" value="217"/>
</dbReference>
<dbReference type="STRING" id="122586.NMB0254"/>
<dbReference type="PaxDb" id="122586-NMB0254"/>
<dbReference type="GeneID" id="93387341"/>
<dbReference type="KEGG" id="nme:NMB0254"/>
<dbReference type="PATRIC" id="fig|122586.8.peg.317"/>
<dbReference type="HOGENOM" id="CLU_144724_2_0_4"/>
<dbReference type="InParanoid" id="Q7DDS0"/>
<dbReference type="OrthoDB" id="9801357at2"/>
<dbReference type="Proteomes" id="UP000000425">
    <property type="component" value="Chromosome"/>
</dbReference>
<dbReference type="GO" id="GO:0030964">
    <property type="term" value="C:NADH dehydrogenase complex"/>
    <property type="evidence" value="ECO:0000318"/>
    <property type="project" value="GO_Central"/>
</dbReference>
<dbReference type="GO" id="GO:0005886">
    <property type="term" value="C:plasma membrane"/>
    <property type="evidence" value="ECO:0007669"/>
    <property type="project" value="UniProtKB-SubCell"/>
</dbReference>
<dbReference type="GO" id="GO:0050136">
    <property type="term" value="F:NADH:ubiquinone reductase (non-electrogenic) activity"/>
    <property type="evidence" value="ECO:0007669"/>
    <property type="project" value="UniProtKB-UniRule"/>
</dbReference>
<dbReference type="GO" id="GO:0048038">
    <property type="term" value="F:quinone binding"/>
    <property type="evidence" value="ECO:0007669"/>
    <property type="project" value="UniProtKB-KW"/>
</dbReference>
<dbReference type="GO" id="GO:0042773">
    <property type="term" value="P:ATP synthesis coupled electron transport"/>
    <property type="evidence" value="ECO:0007669"/>
    <property type="project" value="InterPro"/>
</dbReference>
<dbReference type="FunFam" id="1.10.287.3510:FF:000001">
    <property type="entry name" value="NADH-quinone oxidoreductase subunit K"/>
    <property type="match status" value="1"/>
</dbReference>
<dbReference type="Gene3D" id="1.10.287.3510">
    <property type="match status" value="1"/>
</dbReference>
<dbReference type="HAMAP" id="MF_01456">
    <property type="entry name" value="NDH1_NuoK"/>
    <property type="match status" value="1"/>
</dbReference>
<dbReference type="InterPro" id="IPR001133">
    <property type="entry name" value="NADH_UbQ_OxRdtase_chain4L/K"/>
</dbReference>
<dbReference type="InterPro" id="IPR039428">
    <property type="entry name" value="NUOK/Mnh_C1-like"/>
</dbReference>
<dbReference type="NCBIfam" id="NF004320">
    <property type="entry name" value="PRK05715.1-2"/>
    <property type="match status" value="1"/>
</dbReference>
<dbReference type="NCBIfam" id="NF004321">
    <property type="entry name" value="PRK05715.1-3"/>
    <property type="match status" value="1"/>
</dbReference>
<dbReference type="NCBIfam" id="NF004323">
    <property type="entry name" value="PRK05715.1-5"/>
    <property type="match status" value="1"/>
</dbReference>
<dbReference type="PANTHER" id="PTHR11434:SF21">
    <property type="entry name" value="NADH DEHYDROGENASE SUBUNIT 4L-RELATED"/>
    <property type="match status" value="1"/>
</dbReference>
<dbReference type="PANTHER" id="PTHR11434">
    <property type="entry name" value="NADH-UBIQUINONE OXIDOREDUCTASE SUBUNIT ND4L"/>
    <property type="match status" value="1"/>
</dbReference>
<dbReference type="Pfam" id="PF00420">
    <property type="entry name" value="Oxidored_q2"/>
    <property type="match status" value="1"/>
</dbReference>
<comment type="function">
    <text evidence="1">NDH-1 shuttles electrons from NADH, via FMN and iron-sulfur (Fe-S) centers, to quinones in the respiratory chain. The immediate electron acceptor for the enzyme in this species is believed to be ubiquinone. Couples the redox reaction to proton translocation (for every two electrons transferred, four hydrogen ions are translocated across the cytoplasmic membrane), and thus conserves the redox energy in a proton gradient.</text>
</comment>
<comment type="catalytic activity">
    <reaction evidence="1">
        <text>a quinone + NADH + 5 H(+)(in) = a quinol + NAD(+) + 4 H(+)(out)</text>
        <dbReference type="Rhea" id="RHEA:57888"/>
        <dbReference type="ChEBI" id="CHEBI:15378"/>
        <dbReference type="ChEBI" id="CHEBI:24646"/>
        <dbReference type="ChEBI" id="CHEBI:57540"/>
        <dbReference type="ChEBI" id="CHEBI:57945"/>
        <dbReference type="ChEBI" id="CHEBI:132124"/>
    </reaction>
</comment>
<comment type="subunit">
    <text evidence="1">NDH-1 is composed of 14 different subunits. Subunits NuoA, H, J, K, L, M, N constitute the membrane sector of the complex.</text>
</comment>
<comment type="subcellular location">
    <subcellularLocation>
        <location evidence="1">Cell inner membrane</location>
        <topology evidence="1">Multi-pass membrane protein</topology>
    </subcellularLocation>
</comment>
<comment type="similarity">
    <text evidence="1">Belongs to the complex I subunit 4L family.</text>
</comment>
<keyword id="KW-0997">Cell inner membrane</keyword>
<keyword id="KW-1003">Cell membrane</keyword>
<keyword id="KW-0472">Membrane</keyword>
<keyword id="KW-0520">NAD</keyword>
<keyword id="KW-0874">Quinone</keyword>
<keyword id="KW-1185">Reference proteome</keyword>
<keyword id="KW-1278">Translocase</keyword>
<keyword id="KW-0812">Transmembrane</keyword>
<keyword id="KW-1133">Transmembrane helix</keyword>
<keyword id="KW-0813">Transport</keyword>
<keyword id="KW-0830">Ubiquinone</keyword>
<accession>Q7DDS0</accession>
<gene>
    <name evidence="1" type="primary">nuoK</name>
    <name type="ordered locus">NMB0254</name>
</gene>
<name>NUOK_NEIMB</name>
<protein>
    <recommendedName>
        <fullName evidence="1">NADH-quinone oxidoreductase subunit K</fullName>
        <ecNumber evidence="1">7.1.1.-</ecNumber>
    </recommendedName>
    <alternativeName>
        <fullName evidence="1">NADH dehydrogenase I subunit K</fullName>
    </alternativeName>
    <alternativeName>
        <fullName evidence="1">NDH-1 subunit K</fullName>
    </alternativeName>
</protein>
<reference key="1">
    <citation type="journal article" date="2000" name="Science">
        <title>Complete genome sequence of Neisseria meningitidis serogroup B strain MC58.</title>
        <authorList>
            <person name="Tettelin H."/>
            <person name="Saunders N.J."/>
            <person name="Heidelberg J.F."/>
            <person name="Jeffries A.C."/>
            <person name="Nelson K.E."/>
            <person name="Eisen J.A."/>
            <person name="Ketchum K.A."/>
            <person name="Hood D.W."/>
            <person name="Peden J.F."/>
            <person name="Dodson R.J."/>
            <person name="Nelson W.C."/>
            <person name="Gwinn M.L."/>
            <person name="DeBoy R.T."/>
            <person name="Peterson J.D."/>
            <person name="Hickey E.K."/>
            <person name="Haft D.H."/>
            <person name="Salzberg S.L."/>
            <person name="White O."/>
            <person name="Fleischmann R.D."/>
            <person name="Dougherty B.A."/>
            <person name="Mason T.M."/>
            <person name="Ciecko A."/>
            <person name="Parksey D.S."/>
            <person name="Blair E."/>
            <person name="Cittone H."/>
            <person name="Clark E.B."/>
            <person name="Cotton M.D."/>
            <person name="Utterback T.R."/>
            <person name="Khouri H.M."/>
            <person name="Qin H."/>
            <person name="Vamathevan J.J."/>
            <person name="Gill J."/>
            <person name="Scarlato V."/>
            <person name="Masignani V."/>
            <person name="Pizza M."/>
            <person name="Grandi G."/>
            <person name="Sun L."/>
            <person name="Smith H.O."/>
            <person name="Fraser C.M."/>
            <person name="Moxon E.R."/>
            <person name="Rappuoli R."/>
            <person name="Venter J.C."/>
        </authorList>
    </citation>
    <scope>NUCLEOTIDE SEQUENCE [LARGE SCALE GENOMIC DNA]</scope>
    <source>
        <strain>ATCC BAA-335 / MC58</strain>
    </source>
</reference>
<feature type="chain" id="PRO_0000390142" description="NADH-quinone oxidoreductase subunit K">
    <location>
        <begin position="1"/>
        <end position="101"/>
    </location>
</feature>
<feature type="transmembrane region" description="Helical" evidence="1">
    <location>
        <begin position="4"/>
        <end position="24"/>
    </location>
</feature>
<feature type="transmembrane region" description="Helical" evidence="1">
    <location>
        <begin position="30"/>
        <end position="50"/>
    </location>
</feature>
<feature type="transmembrane region" description="Helical" evidence="1">
    <location>
        <begin position="61"/>
        <end position="81"/>
    </location>
</feature>
<sequence>MITLTHYLVLGALLFGISAMGIFMNRKNVLVLLMSIELMLLAVNFNFIAFSQHLGDTAGQIFVFFVLTVAAAESAIGLAIMVLVYRNRQTINVADLDELKG</sequence>
<evidence type="ECO:0000255" key="1">
    <source>
        <dbReference type="HAMAP-Rule" id="MF_01456"/>
    </source>
</evidence>
<organism>
    <name type="scientific">Neisseria meningitidis serogroup B (strain ATCC BAA-335 / MC58)</name>
    <dbReference type="NCBI Taxonomy" id="122586"/>
    <lineage>
        <taxon>Bacteria</taxon>
        <taxon>Pseudomonadati</taxon>
        <taxon>Pseudomonadota</taxon>
        <taxon>Betaproteobacteria</taxon>
        <taxon>Neisseriales</taxon>
        <taxon>Neisseriaceae</taxon>
        <taxon>Neisseria</taxon>
    </lineage>
</organism>